<keyword id="KW-0150">Chloroplast</keyword>
<keyword id="KW-0456">Lyase</keyword>
<keyword id="KW-0460">Magnesium</keyword>
<keyword id="KW-0479">Metal-binding</keyword>
<keyword id="KW-0934">Plastid</keyword>
<keyword id="KW-0809">Transit peptide</keyword>
<proteinExistence type="evidence at transcript level"/>
<gene>
    <name evidence="5" type="primary">KSL1</name>
</gene>
<dbReference type="EC" id="4.2.3.185" evidence="1"/>
<dbReference type="EMBL" id="MK043035">
    <property type="protein sequence ID" value="QFP98579.1"/>
    <property type="molecule type" value="mRNA"/>
</dbReference>
<dbReference type="SMR" id="A0A5P8DI06"/>
<dbReference type="UniPathway" id="UPA00213"/>
<dbReference type="GO" id="GO:0009507">
    <property type="term" value="C:chloroplast"/>
    <property type="evidence" value="ECO:0007669"/>
    <property type="project" value="UniProtKB-SubCell"/>
</dbReference>
<dbReference type="GO" id="GO:0000287">
    <property type="term" value="F:magnesium ion binding"/>
    <property type="evidence" value="ECO:0007669"/>
    <property type="project" value="InterPro"/>
</dbReference>
<dbReference type="GO" id="GO:0010333">
    <property type="term" value="F:terpene synthase activity"/>
    <property type="evidence" value="ECO:0007669"/>
    <property type="project" value="InterPro"/>
</dbReference>
<dbReference type="GO" id="GO:0009686">
    <property type="term" value="P:gibberellin biosynthetic process"/>
    <property type="evidence" value="ECO:0007669"/>
    <property type="project" value="TreeGrafter"/>
</dbReference>
<dbReference type="GO" id="GO:1901946">
    <property type="term" value="P:miltiradiene biosynthetic process"/>
    <property type="evidence" value="ECO:0000250"/>
    <property type="project" value="UniProtKB"/>
</dbReference>
<dbReference type="GO" id="GO:0016114">
    <property type="term" value="P:terpenoid biosynthetic process"/>
    <property type="evidence" value="ECO:0000250"/>
    <property type="project" value="UniProtKB"/>
</dbReference>
<dbReference type="FunFam" id="1.50.10.130:FF:000002">
    <property type="entry name" value="Ent-copalyl diphosphate synthase, chloroplastic"/>
    <property type="match status" value="1"/>
</dbReference>
<dbReference type="FunFam" id="1.10.600.10:FF:000005">
    <property type="entry name" value="Ent-kaur-16-ene synthase, chloroplastic"/>
    <property type="match status" value="1"/>
</dbReference>
<dbReference type="Gene3D" id="1.50.10.160">
    <property type="match status" value="1"/>
</dbReference>
<dbReference type="Gene3D" id="1.10.600.10">
    <property type="entry name" value="Farnesyl Diphosphate Synthase"/>
    <property type="match status" value="1"/>
</dbReference>
<dbReference type="Gene3D" id="1.50.10.130">
    <property type="entry name" value="Terpene synthase, N-terminal domain"/>
    <property type="match status" value="1"/>
</dbReference>
<dbReference type="InterPro" id="IPR008949">
    <property type="entry name" value="Isoprenoid_synthase_dom_sf"/>
</dbReference>
<dbReference type="InterPro" id="IPR001906">
    <property type="entry name" value="Terpene_synth_N"/>
</dbReference>
<dbReference type="InterPro" id="IPR036965">
    <property type="entry name" value="Terpene_synth_N_sf"/>
</dbReference>
<dbReference type="InterPro" id="IPR050148">
    <property type="entry name" value="Terpene_synthase-like"/>
</dbReference>
<dbReference type="InterPro" id="IPR005630">
    <property type="entry name" value="Terpene_synthase_metal-bd"/>
</dbReference>
<dbReference type="InterPro" id="IPR008930">
    <property type="entry name" value="Terpenoid_cyclase/PrenylTrfase"/>
</dbReference>
<dbReference type="PANTHER" id="PTHR31739">
    <property type="entry name" value="ENT-COPALYL DIPHOSPHATE SYNTHASE, CHLOROPLASTIC"/>
    <property type="match status" value="1"/>
</dbReference>
<dbReference type="PANTHER" id="PTHR31739:SF3">
    <property type="entry name" value="ENT-KAUR-16-ENE SYNTHASE, CHLOROPLASTIC"/>
    <property type="match status" value="1"/>
</dbReference>
<dbReference type="Pfam" id="PF01397">
    <property type="entry name" value="Terpene_synth"/>
    <property type="match status" value="1"/>
</dbReference>
<dbReference type="Pfam" id="PF03936">
    <property type="entry name" value="Terpene_synth_C"/>
    <property type="match status" value="1"/>
</dbReference>
<dbReference type="SFLD" id="SFLDG01014">
    <property type="entry name" value="Terpene_Cyclase_Like_1_N-term"/>
    <property type="match status" value="1"/>
</dbReference>
<dbReference type="SUPFAM" id="SSF48239">
    <property type="entry name" value="Terpenoid cyclases/Protein prenyltransferases"/>
    <property type="match status" value="2"/>
</dbReference>
<dbReference type="SUPFAM" id="SSF48576">
    <property type="entry name" value="Terpenoid synthases"/>
    <property type="match status" value="1"/>
</dbReference>
<organism>
    <name type="scientific">Isodon japonicus</name>
    <name type="common">Scutellaria japonica</name>
    <dbReference type="NCBI Taxonomy" id="425908"/>
    <lineage>
        <taxon>Eukaryota</taxon>
        <taxon>Viridiplantae</taxon>
        <taxon>Streptophyta</taxon>
        <taxon>Embryophyta</taxon>
        <taxon>Tracheophyta</taxon>
        <taxon>Spermatophyta</taxon>
        <taxon>Magnoliopsida</taxon>
        <taxon>eudicotyledons</taxon>
        <taxon>Gunneridae</taxon>
        <taxon>Pentapetalae</taxon>
        <taxon>asterids</taxon>
        <taxon>lamiids</taxon>
        <taxon>Lamiales</taxon>
        <taxon>Lamiaceae</taxon>
        <taxon>Nepetoideae</taxon>
        <taxon>Ocimeae</taxon>
        <taxon>Isodoninae</taxon>
        <taxon>Isodon</taxon>
    </lineage>
</organism>
<feature type="transit peptide" description="Chloroplast" evidence="3">
    <location>
        <begin position="1" status="less than"/>
        <end position="48"/>
    </location>
</feature>
<feature type="chain" id="PRO_0000452382" description="Ent-atiserene synthase KSL1, chloroplastic">
    <location>
        <begin position="49"/>
        <end position="797"/>
    </location>
</feature>
<feature type="region of interest" description="Disordered" evidence="4">
    <location>
        <begin position="21"/>
        <end position="47"/>
    </location>
</feature>
<feature type="short sequence motif" description="DDXXD motif" evidence="6">
    <location>
        <begin position="547"/>
        <end position="551"/>
    </location>
</feature>
<feature type="compositionally biased region" description="Low complexity" evidence="4">
    <location>
        <begin position="21"/>
        <end position="32"/>
    </location>
</feature>
<feature type="binding site" evidence="2">
    <location>
        <position position="547"/>
    </location>
    <ligand>
        <name>Mg(2+)</name>
        <dbReference type="ChEBI" id="CHEBI:18420"/>
        <label>1</label>
    </ligand>
</feature>
<feature type="binding site" evidence="2">
    <location>
        <position position="547"/>
    </location>
    <ligand>
        <name>Mg(2+)</name>
        <dbReference type="ChEBI" id="CHEBI:18420"/>
        <label>2</label>
    </ligand>
</feature>
<feature type="binding site" evidence="2">
    <location>
        <position position="551"/>
    </location>
    <ligand>
        <name>Mg(2+)</name>
        <dbReference type="ChEBI" id="CHEBI:18420"/>
        <label>1</label>
    </ligand>
</feature>
<feature type="binding site" evidence="2">
    <location>
        <position position="551"/>
    </location>
    <ligand>
        <name>Mg(2+)</name>
        <dbReference type="ChEBI" id="CHEBI:18420"/>
        <label>2</label>
    </ligand>
</feature>
<feature type="binding site" evidence="2">
    <location>
        <position position="691"/>
    </location>
    <ligand>
        <name>Mg(2+)</name>
        <dbReference type="ChEBI" id="CHEBI:18420"/>
        <label>3</label>
    </ligand>
</feature>
<feature type="binding site" evidence="2">
    <location>
        <position position="699"/>
    </location>
    <ligand>
        <name>Mg(2+)</name>
        <dbReference type="ChEBI" id="CHEBI:18420"/>
        <label>3</label>
    </ligand>
</feature>
<feature type="non-terminal residue" evidence="6">
    <location>
        <position position="1"/>
    </location>
</feature>
<sequence length="797" mass="90880">LVKDDMSLILSSFSLFRSSRSSPASASLAGSGHPRTTPPKIASLQSPMVEETKERIAKLFKKKEVSRSTYDTAWVGMVPSPFSSEEPCFPDCLFWLLQNQCPDGSWAQPHHHSLSPSLLNKDVLSSTLASILALQKWGLGQRHIAKGLHFLELNFASATDNSQITPLGFDIVFPAMLDYAADLSLNLRLDPTTLNDLMNRRDSELKRCTENGSAETEVYLAYIGEGMGKLHDWETVMKYQRKNGSLFNSPSTTAAAFIALGNSDCLKYLNSALKKFGSAVPAVYPLDIYSQLCIVDNLERLGISRFFSTEIQSVLDDTYRCWLQGDEEIFMDASTCGLAFRTLRMNGYKVTSDSFIKVVQDCFSSSSPGHMRDVNTTLELYRASELMLYPHEIELEKQNSRLRSLLEQELSGGSIQSSQLNAEVKQALDYPFYAVLDRMAKKKTIEHYNIDDSRILKTSFCLPSFGNKDLLSLSVQDYNRCQAIHREELREFDRWFVENRLDELEFARHKSAYYYCYFAAAATFFAPELSDARMSWAKNALMTTMVDDLFDVTGSVEEMKNLIQLVELWDVDVSTECRSHKVQILFSALKRTICEVGDRAHQLQGRSIRSHIIVIWLDLLHSMMKEVEWSRDKFVPTMDEYVSNAYVSFALGPIVLPALYLVGPKLSEEMVNHSEYHNLFKLMSMCGRLLNDIRGYEREHDDGKLNAMSLYIMNNGGEITPEVAIMEIKSWNDRQRRELLRLVLEEKSVIPKACKDLFWHMCSVVHLFYNKDDGFWSQELIEVVNQVIHQPILLSHF</sequence>
<reference key="1">
    <citation type="submission" date="2018-10" db="EMBL/GenBank/DDBJ databases">
        <authorList>
            <person name="Ide Y."/>
            <person name="Yamamura Y."/>
            <person name="Lee J.-B."/>
        </authorList>
    </citation>
    <scope>NUCLEOTIDE SEQUENCE [MRNA]</scope>
</reference>
<protein>
    <recommendedName>
        <fullName evidence="6">Ent-atiserene synthase KSL1, chloroplastic</fullName>
        <ecNumber evidence="1">4.2.3.185</ecNumber>
    </recommendedName>
</protein>
<evidence type="ECO:0000250" key="1">
    <source>
        <dbReference type="UniProtKB" id="A0A1Z3GBK8"/>
    </source>
</evidence>
<evidence type="ECO:0000250" key="2">
    <source>
        <dbReference type="UniProtKB" id="Q40577"/>
    </source>
</evidence>
<evidence type="ECO:0000255" key="3"/>
<evidence type="ECO:0000256" key="4">
    <source>
        <dbReference type="SAM" id="MobiDB-lite"/>
    </source>
</evidence>
<evidence type="ECO:0000303" key="5">
    <source ref="1"/>
</evidence>
<evidence type="ECO:0000305" key="6"/>
<comment type="function">
    <text evidence="1">Involved in the biosynthesis of ent-kaurene diterpenoids natural products such as oridonin, miltiradiene, eriocalyxin B and nezukol, known to exhibit antitumor, anti-inflammatory and antibacterial activities (By similarity). Catalyzes the conversion of ent-copalyl diphosphate (ent-CPP) to ent-atiserene (By similarity).</text>
</comment>
<comment type="catalytic activity">
    <reaction evidence="1">
        <text>ent-copalyl diphosphate = ent-atiserene + diphosphate</text>
        <dbReference type="Rhea" id="RHEA:54496"/>
        <dbReference type="ChEBI" id="CHEBI:33019"/>
        <dbReference type="ChEBI" id="CHEBI:58553"/>
        <dbReference type="ChEBI" id="CHEBI:138219"/>
        <dbReference type="EC" id="4.2.3.185"/>
    </reaction>
    <physiologicalReaction direction="left-to-right" evidence="1">
        <dbReference type="Rhea" id="RHEA:54497"/>
    </physiologicalReaction>
</comment>
<comment type="cofactor">
    <cofactor evidence="2">
        <name>Mg(2+)</name>
        <dbReference type="ChEBI" id="CHEBI:18420"/>
    </cofactor>
    <text evidence="2">Binds 3 Mg(2+) ions per subunit.</text>
</comment>
<comment type="pathway">
    <text evidence="1">Secondary metabolite biosynthesis; terpenoid biosynthesis.</text>
</comment>
<comment type="subcellular location">
    <subcellularLocation>
        <location evidence="3">Plastid</location>
        <location evidence="3">Chloroplast</location>
    </subcellularLocation>
</comment>
<comment type="domain">
    <text evidence="6">The Asp-Asp-Xaa-Xaa-Asp/Glu (DDXXD/E) motif is important for the catalytic activity, presumably through binding to Mg(2+).</text>
</comment>
<comment type="similarity">
    <text evidence="6">Belongs to the terpene synthase family.</text>
</comment>
<name>KSL1_ISOJA</name>
<accession>A0A5P8DI06</accession>